<reference key="1">
    <citation type="journal article" date="2005" name="Nature">
        <title>Sequencing of Aspergillus nidulans and comparative analysis with A. fumigatus and A. oryzae.</title>
        <authorList>
            <person name="Galagan J.E."/>
            <person name="Calvo S.E."/>
            <person name="Cuomo C."/>
            <person name="Ma L.-J."/>
            <person name="Wortman J.R."/>
            <person name="Batzoglou S."/>
            <person name="Lee S.-I."/>
            <person name="Bastuerkmen M."/>
            <person name="Spevak C.C."/>
            <person name="Clutterbuck J."/>
            <person name="Kapitonov V."/>
            <person name="Jurka J."/>
            <person name="Scazzocchio C."/>
            <person name="Farman M.L."/>
            <person name="Butler J."/>
            <person name="Purcell S."/>
            <person name="Harris S."/>
            <person name="Braus G.H."/>
            <person name="Draht O."/>
            <person name="Busch S."/>
            <person name="D'Enfert C."/>
            <person name="Bouchier C."/>
            <person name="Goldman G.H."/>
            <person name="Bell-Pedersen D."/>
            <person name="Griffiths-Jones S."/>
            <person name="Doonan J.H."/>
            <person name="Yu J."/>
            <person name="Vienken K."/>
            <person name="Pain A."/>
            <person name="Freitag M."/>
            <person name="Selker E.U."/>
            <person name="Archer D.B."/>
            <person name="Penalva M.A."/>
            <person name="Oakley B.R."/>
            <person name="Momany M."/>
            <person name="Tanaka T."/>
            <person name="Kumagai T."/>
            <person name="Asai K."/>
            <person name="Machida M."/>
            <person name="Nierman W.C."/>
            <person name="Denning D.W."/>
            <person name="Caddick M.X."/>
            <person name="Hynes M."/>
            <person name="Paoletti M."/>
            <person name="Fischer R."/>
            <person name="Miller B.L."/>
            <person name="Dyer P.S."/>
            <person name="Sachs M.S."/>
            <person name="Osmani S.A."/>
            <person name="Birren B.W."/>
        </authorList>
    </citation>
    <scope>NUCLEOTIDE SEQUENCE [LARGE SCALE GENOMIC DNA]</scope>
    <source>
        <strain>FGSC A4 / ATCC 38163 / CBS 112.46 / NRRL 194 / M139</strain>
    </source>
</reference>
<reference key="2">
    <citation type="journal article" date="2009" name="Fungal Genet. Biol.">
        <title>The 2008 update of the Aspergillus nidulans genome annotation: a community effort.</title>
        <authorList>
            <person name="Wortman J.R."/>
            <person name="Gilsenan J.M."/>
            <person name="Joardar V."/>
            <person name="Deegan J."/>
            <person name="Clutterbuck J."/>
            <person name="Andersen M.R."/>
            <person name="Archer D."/>
            <person name="Bencina M."/>
            <person name="Braus G."/>
            <person name="Coutinho P."/>
            <person name="von Dohren H."/>
            <person name="Doonan J."/>
            <person name="Driessen A.J."/>
            <person name="Durek P."/>
            <person name="Espeso E."/>
            <person name="Fekete E."/>
            <person name="Flipphi M."/>
            <person name="Estrada C.G."/>
            <person name="Geysens S."/>
            <person name="Goldman G."/>
            <person name="de Groot P.W."/>
            <person name="Hansen K."/>
            <person name="Harris S.D."/>
            <person name="Heinekamp T."/>
            <person name="Helmstaedt K."/>
            <person name="Henrissat B."/>
            <person name="Hofmann G."/>
            <person name="Homan T."/>
            <person name="Horio T."/>
            <person name="Horiuchi H."/>
            <person name="James S."/>
            <person name="Jones M."/>
            <person name="Karaffa L."/>
            <person name="Karanyi Z."/>
            <person name="Kato M."/>
            <person name="Keller N."/>
            <person name="Kelly D.E."/>
            <person name="Kiel J.A."/>
            <person name="Kim J.M."/>
            <person name="van der Klei I.J."/>
            <person name="Klis F.M."/>
            <person name="Kovalchuk A."/>
            <person name="Krasevec N."/>
            <person name="Kubicek C.P."/>
            <person name="Liu B."/>
            <person name="Maccabe A."/>
            <person name="Meyer V."/>
            <person name="Mirabito P."/>
            <person name="Miskei M."/>
            <person name="Mos M."/>
            <person name="Mullins J."/>
            <person name="Nelson D.R."/>
            <person name="Nielsen J."/>
            <person name="Oakley B.R."/>
            <person name="Osmani S.A."/>
            <person name="Pakula T."/>
            <person name="Paszewski A."/>
            <person name="Paulsen I."/>
            <person name="Pilsyk S."/>
            <person name="Pocsi I."/>
            <person name="Punt P.J."/>
            <person name="Ram A.F."/>
            <person name="Ren Q."/>
            <person name="Robellet X."/>
            <person name="Robson G."/>
            <person name="Seiboth B."/>
            <person name="van Solingen P."/>
            <person name="Specht T."/>
            <person name="Sun J."/>
            <person name="Taheri-Talesh N."/>
            <person name="Takeshita N."/>
            <person name="Ussery D."/>
            <person name="vanKuyk P.A."/>
            <person name="Visser H."/>
            <person name="van de Vondervoort P.J."/>
            <person name="de Vries R.P."/>
            <person name="Walton J."/>
            <person name="Xiang X."/>
            <person name="Xiong Y."/>
            <person name="Zeng A.P."/>
            <person name="Brandt B.W."/>
            <person name="Cornell M.J."/>
            <person name="van den Hondel C.A."/>
            <person name="Visser J."/>
            <person name="Oliver S.G."/>
            <person name="Turner G."/>
        </authorList>
    </citation>
    <scope>GENOME REANNOTATION</scope>
    <source>
        <strain>FGSC A4 / ATCC 38163 / CBS 112.46 / NRRL 194 / M139</strain>
    </source>
</reference>
<comment type="function">
    <text evidence="1">Plays a central role in chromosome cohesion during cell division by preventing premature dissociation of cohesin complex from centromeres after prophase, when most of cohesin complex dissociates from chromosomes arms.</text>
</comment>
<comment type="subcellular location">
    <subcellularLocation>
        <location evidence="1">Nucleus</location>
    </subcellularLocation>
    <subcellularLocation>
        <location evidence="1">Chromosome</location>
        <location evidence="1">Centromere</location>
    </subcellularLocation>
</comment>
<comment type="similarity">
    <text evidence="4">Belongs to the shugoshin family.</text>
</comment>
<dbReference type="EMBL" id="AACD01000020">
    <property type="protein sequence ID" value="EAA65155.1"/>
    <property type="molecule type" value="Genomic_DNA"/>
</dbReference>
<dbReference type="EMBL" id="BN001308">
    <property type="protein sequence ID" value="CBF87574.1"/>
    <property type="molecule type" value="Genomic_DNA"/>
</dbReference>
<dbReference type="RefSeq" id="XP_659003.1">
    <property type="nucleotide sequence ID" value="XM_653911.1"/>
</dbReference>
<dbReference type="SMR" id="Q5BDI1"/>
<dbReference type="EnsemblFungi" id="CBF87574">
    <property type="protein sequence ID" value="CBF87574"/>
    <property type="gene ID" value="ANIA_01399"/>
</dbReference>
<dbReference type="KEGG" id="ani:ANIA_01399"/>
<dbReference type="eggNOG" id="ENOG502SFX7">
    <property type="taxonomic scope" value="Eukaryota"/>
</dbReference>
<dbReference type="HOGENOM" id="CLU_013723_2_0_1"/>
<dbReference type="InParanoid" id="Q5BDI1"/>
<dbReference type="OMA" id="EMNPMAH"/>
<dbReference type="OrthoDB" id="5394106at2759"/>
<dbReference type="Proteomes" id="UP000000560">
    <property type="component" value="Chromosome VIII"/>
</dbReference>
<dbReference type="GO" id="GO:0000775">
    <property type="term" value="C:chromosome, centromeric region"/>
    <property type="evidence" value="ECO:0007669"/>
    <property type="project" value="UniProtKB-SubCell"/>
</dbReference>
<dbReference type="GO" id="GO:0005634">
    <property type="term" value="C:nucleus"/>
    <property type="evidence" value="ECO:0007669"/>
    <property type="project" value="UniProtKB-SubCell"/>
</dbReference>
<dbReference type="GO" id="GO:0051301">
    <property type="term" value="P:cell division"/>
    <property type="evidence" value="ECO:0007669"/>
    <property type="project" value="UniProtKB-KW"/>
</dbReference>
<dbReference type="GO" id="GO:0007059">
    <property type="term" value="P:chromosome segregation"/>
    <property type="evidence" value="ECO:0007669"/>
    <property type="project" value="UniProtKB-KW"/>
</dbReference>
<dbReference type="InterPro" id="IPR011516">
    <property type="entry name" value="Shugoshin_N"/>
</dbReference>
<dbReference type="Pfam" id="PF07558">
    <property type="entry name" value="Shugoshin_N"/>
    <property type="match status" value="1"/>
</dbReference>
<name>SGO1_EMENI</name>
<evidence type="ECO:0000250" key="1"/>
<evidence type="ECO:0000255" key="2"/>
<evidence type="ECO:0000256" key="3">
    <source>
        <dbReference type="SAM" id="MobiDB-lite"/>
    </source>
</evidence>
<evidence type="ECO:0000305" key="4"/>
<accession>Q5BDI1</accession>
<accession>C8VRM2</accession>
<organism>
    <name type="scientific">Emericella nidulans (strain FGSC A4 / ATCC 38163 / CBS 112.46 / NRRL 194 / M139)</name>
    <name type="common">Aspergillus nidulans</name>
    <dbReference type="NCBI Taxonomy" id="227321"/>
    <lineage>
        <taxon>Eukaryota</taxon>
        <taxon>Fungi</taxon>
        <taxon>Dikarya</taxon>
        <taxon>Ascomycota</taxon>
        <taxon>Pezizomycotina</taxon>
        <taxon>Eurotiomycetes</taxon>
        <taxon>Eurotiomycetidae</taxon>
        <taxon>Eurotiales</taxon>
        <taxon>Aspergillaceae</taxon>
        <taxon>Aspergillus</taxon>
        <taxon>Aspergillus subgen. Nidulantes</taxon>
    </lineage>
</organism>
<feature type="chain" id="PRO_0000055447" description="Shugoshin">
    <location>
        <begin position="1"/>
        <end position="479"/>
    </location>
</feature>
<feature type="region of interest" description="Disordered" evidence="3">
    <location>
        <begin position="109"/>
        <end position="145"/>
    </location>
</feature>
<feature type="region of interest" description="Disordered" evidence="3">
    <location>
        <begin position="220"/>
        <end position="247"/>
    </location>
</feature>
<feature type="region of interest" description="Disordered" evidence="3">
    <location>
        <begin position="263"/>
        <end position="479"/>
    </location>
</feature>
<feature type="coiled-coil region" evidence="2">
    <location>
        <begin position="36"/>
        <end position="76"/>
    </location>
</feature>
<feature type="compositionally biased region" description="Basic and acidic residues" evidence="3">
    <location>
        <begin position="123"/>
        <end position="132"/>
    </location>
</feature>
<feature type="compositionally biased region" description="Acidic residues" evidence="3">
    <location>
        <begin position="270"/>
        <end position="286"/>
    </location>
</feature>
<feature type="compositionally biased region" description="Polar residues" evidence="3">
    <location>
        <begin position="290"/>
        <end position="303"/>
    </location>
</feature>
<feature type="compositionally biased region" description="Polar residues" evidence="3">
    <location>
        <begin position="318"/>
        <end position="328"/>
    </location>
</feature>
<feature type="compositionally biased region" description="Basic and acidic residues" evidence="3">
    <location>
        <begin position="335"/>
        <end position="352"/>
    </location>
</feature>
<feature type="compositionally biased region" description="Basic and acidic residues" evidence="3">
    <location>
        <begin position="379"/>
        <end position="388"/>
    </location>
</feature>
<feature type="compositionally biased region" description="Polar residues" evidence="3">
    <location>
        <begin position="400"/>
        <end position="411"/>
    </location>
</feature>
<gene>
    <name type="primary">sgo1</name>
    <name type="ORF">AN1399</name>
</gene>
<protein>
    <recommendedName>
        <fullName>Shugoshin</fullName>
    </recommendedName>
</protein>
<proteinExistence type="inferred from homology"/>
<keyword id="KW-0131">Cell cycle</keyword>
<keyword id="KW-0132">Cell division</keyword>
<keyword id="KW-0137">Centromere</keyword>
<keyword id="KW-0158">Chromosome</keyword>
<keyword id="KW-0159">Chromosome partition</keyword>
<keyword id="KW-0175">Coiled coil</keyword>
<keyword id="KW-0539">Nucleus</keyword>
<keyword id="KW-1185">Reference proteome</keyword>
<sequence length="479" mass="53260">MARLNESTASSEPIEILKRRFVRQNREIARVNSIQSLRIRSLESEVSNLLSENVSLREQIITLTQELERFEAARTLHDGVYDVKARLDSKLVELGNLITELGSLPRRYSRAVRENGEPAPARQSRESGPKEVDDTDPEPNLGFLDGRLPVIMEDKLYPRRTLTAQEVQELRDSDTDGPNCSGFEDSSISPKQRVEYDEAATGGPAYFIDTNTIVEEIENEHSLPPNLETRRKKKIGPATVNKDQADTRPISLLDSKFTRKCGAKRKFSAEDDESLFESSPSEDDEFQFSRPAQSPKLFSQNEHASADDGSGELRRPIQSPTLSSQNDHSPVKMKPQSERSIAHVHGERRVLEPKSTNTNILSPAKPSIMKDYNQNHDFGYNEKSEKPLPRQGKGAVDGSKNASPKKSSTRTPVFGNDGNKSGNKQKKSGAIKSNTPSLDGIEDSEIATTADMPSTRPSRRRGTVSQPESHKTEGISMPP</sequence>